<keyword id="KW-0021">Allosteric enzyme</keyword>
<keyword id="KW-0067">ATP-binding</keyword>
<keyword id="KW-0963">Cytoplasm</keyword>
<keyword id="KW-0418">Kinase</keyword>
<keyword id="KW-0547">Nucleotide-binding</keyword>
<keyword id="KW-0665">Pyrimidine biosynthesis</keyword>
<keyword id="KW-1185">Reference proteome</keyword>
<keyword id="KW-0808">Transferase</keyword>
<dbReference type="EC" id="2.7.4.22" evidence="1"/>
<dbReference type="EMBL" id="CR954253">
    <property type="protein sequence ID" value="CAI98144.1"/>
    <property type="molecule type" value="Genomic_DNA"/>
</dbReference>
<dbReference type="RefSeq" id="WP_003618573.1">
    <property type="nucleotide sequence ID" value="NZ_JQAV01000006.1"/>
</dbReference>
<dbReference type="SMR" id="Q1G9N8"/>
<dbReference type="STRING" id="390333.Ldb1343"/>
<dbReference type="KEGG" id="ldb:Ldb1343"/>
<dbReference type="PATRIC" id="fig|390333.13.peg.1710"/>
<dbReference type="eggNOG" id="COG0528">
    <property type="taxonomic scope" value="Bacteria"/>
</dbReference>
<dbReference type="HOGENOM" id="CLU_033861_0_0_9"/>
<dbReference type="BioCyc" id="LDEL390333:LDB_RS05750-MONOMER"/>
<dbReference type="UniPathway" id="UPA00159">
    <property type="reaction ID" value="UER00275"/>
</dbReference>
<dbReference type="Proteomes" id="UP000001259">
    <property type="component" value="Chromosome"/>
</dbReference>
<dbReference type="GO" id="GO:0005737">
    <property type="term" value="C:cytoplasm"/>
    <property type="evidence" value="ECO:0007669"/>
    <property type="project" value="UniProtKB-SubCell"/>
</dbReference>
<dbReference type="GO" id="GO:0005524">
    <property type="term" value="F:ATP binding"/>
    <property type="evidence" value="ECO:0007669"/>
    <property type="project" value="UniProtKB-KW"/>
</dbReference>
<dbReference type="GO" id="GO:0033862">
    <property type="term" value="F:UMP kinase activity"/>
    <property type="evidence" value="ECO:0007669"/>
    <property type="project" value="UniProtKB-EC"/>
</dbReference>
<dbReference type="GO" id="GO:0044210">
    <property type="term" value="P:'de novo' CTP biosynthetic process"/>
    <property type="evidence" value="ECO:0007669"/>
    <property type="project" value="UniProtKB-UniRule"/>
</dbReference>
<dbReference type="GO" id="GO:0006225">
    <property type="term" value="P:UDP biosynthetic process"/>
    <property type="evidence" value="ECO:0007669"/>
    <property type="project" value="TreeGrafter"/>
</dbReference>
<dbReference type="CDD" id="cd04254">
    <property type="entry name" value="AAK_UMPK-PyrH-Ec"/>
    <property type="match status" value="1"/>
</dbReference>
<dbReference type="FunFam" id="3.40.1160.10:FF:000001">
    <property type="entry name" value="Uridylate kinase"/>
    <property type="match status" value="1"/>
</dbReference>
<dbReference type="Gene3D" id="3.40.1160.10">
    <property type="entry name" value="Acetylglutamate kinase-like"/>
    <property type="match status" value="1"/>
</dbReference>
<dbReference type="HAMAP" id="MF_01220_B">
    <property type="entry name" value="PyrH_B"/>
    <property type="match status" value="1"/>
</dbReference>
<dbReference type="InterPro" id="IPR036393">
    <property type="entry name" value="AceGlu_kinase-like_sf"/>
</dbReference>
<dbReference type="InterPro" id="IPR001048">
    <property type="entry name" value="Asp/Glu/Uridylate_kinase"/>
</dbReference>
<dbReference type="InterPro" id="IPR011817">
    <property type="entry name" value="Uridylate_kinase"/>
</dbReference>
<dbReference type="InterPro" id="IPR015963">
    <property type="entry name" value="Uridylate_kinase_bac"/>
</dbReference>
<dbReference type="NCBIfam" id="TIGR02075">
    <property type="entry name" value="pyrH_bact"/>
    <property type="match status" value="1"/>
</dbReference>
<dbReference type="PANTHER" id="PTHR42833">
    <property type="entry name" value="URIDYLATE KINASE"/>
    <property type="match status" value="1"/>
</dbReference>
<dbReference type="PANTHER" id="PTHR42833:SF4">
    <property type="entry name" value="URIDYLATE KINASE PUMPKIN, CHLOROPLASTIC"/>
    <property type="match status" value="1"/>
</dbReference>
<dbReference type="Pfam" id="PF00696">
    <property type="entry name" value="AA_kinase"/>
    <property type="match status" value="1"/>
</dbReference>
<dbReference type="PIRSF" id="PIRSF005650">
    <property type="entry name" value="Uridylate_kin"/>
    <property type="match status" value="1"/>
</dbReference>
<dbReference type="SUPFAM" id="SSF53633">
    <property type="entry name" value="Carbamate kinase-like"/>
    <property type="match status" value="1"/>
</dbReference>
<organism>
    <name type="scientific">Lactobacillus delbrueckii subsp. bulgaricus (strain ATCC 11842 / DSM 20081 / BCRC 10696 / JCM 1002 / NBRC 13953 / NCIMB 11778 / NCTC 12712 / WDCM 00102 / Lb 14)</name>
    <dbReference type="NCBI Taxonomy" id="390333"/>
    <lineage>
        <taxon>Bacteria</taxon>
        <taxon>Bacillati</taxon>
        <taxon>Bacillota</taxon>
        <taxon>Bacilli</taxon>
        <taxon>Lactobacillales</taxon>
        <taxon>Lactobacillaceae</taxon>
        <taxon>Lactobacillus</taxon>
    </lineage>
</organism>
<accession>Q1G9N8</accession>
<reference key="1">
    <citation type="journal article" date="2006" name="Proc. Natl. Acad. Sci. U.S.A.">
        <title>The complete genome sequence of Lactobacillus bulgaricus reveals extensive and ongoing reductive evolution.</title>
        <authorList>
            <person name="van de Guchte M."/>
            <person name="Penaud S."/>
            <person name="Grimaldi C."/>
            <person name="Barbe V."/>
            <person name="Bryson K."/>
            <person name="Nicolas P."/>
            <person name="Robert C."/>
            <person name="Oztas S."/>
            <person name="Mangenot S."/>
            <person name="Couloux A."/>
            <person name="Loux V."/>
            <person name="Dervyn R."/>
            <person name="Bossy R."/>
            <person name="Bolotin A."/>
            <person name="Batto J.-M."/>
            <person name="Walunas T."/>
            <person name="Gibrat J.-F."/>
            <person name="Bessieres P."/>
            <person name="Weissenbach J."/>
            <person name="Ehrlich S.D."/>
            <person name="Maguin E."/>
        </authorList>
    </citation>
    <scope>NUCLEOTIDE SEQUENCE [LARGE SCALE GENOMIC DNA]</scope>
    <source>
        <strain>ATCC 11842 / DSM 20081 / BCRC 10696 / JCM 1002 / NBRC 13953 / NCIMB 11778 / NCTC 12712 / WDCM 00102 / Lb 14</strain>
    </source>
</reference>
<comment type="function">
    <text evidence="1">Catalyzes the reversible phosphorylation of UMP to UDP.</text>
</comment>
<comment type="catalytic activity">
    <reaction evidence="1">
        <text>UMP + ATP = UDP + ADP</text>
        <dbReference type="Rhea" id="RHEA:24400"/>
        <dbReference type="ChEBI" id="CHEBI:30616"/>
        <dbReference type="ChEBI" id="CHEBI:57865"/>
        <dbReference type="ChEBI" id="CHEBI:58223"/>
        <dbReference type="ChEBI" id="CHEBI:456216"/>
        <dbReference type="EC" id="2.7.4.22"/>
    </reaction>
</comment>
<comment type="activity regulation">
    <text evidence="1">Allosterically activated by GTP. Inhibited by UTP.</text>
</comment>
<comment type="pathway">
    <text evidence="1">Pyrimidine metabolism; CTP biosynthesis via de novo pathway; UDP from UMP (UMPK route): step 1/1.</text>
</comment>
<comment type="subunit">
    <text evidence="1">Homohexamer.</text>
</comment>
<comment type="subcellular location">
    <subcellularLocation>
        <location evidence="1">Cytoplasm</location>
    </subcellularLocation>
</comment>
<comment type="similarity">
    <text evidence="1">Belongs to the UMP kinase family.</text>
</comment>
<proteinExistence type="inferred from homology"/>
<evidence type="ECO:0000255" key="1">
    <source>
        <dbReference type="HAMAP-Rule" id="MF_01220"/>
    </source>
</evidence>
<protein>
    <recommendedName>
        <fullName evidence="1">Uridylate kinase</fullName>
        <shortName evidence="1">UK</shortName>
        <ecNumber evidence="1">2.7.4.22</ecNumber>
    </recommendedName>
    <alternativeName>
        <fullName evidence="1">Uridine monophosphate kinase</fullName>
        <shortName evidence="1">UMP kinase</shortName>
        <shortName evidence="1">UMPK</shortName>
    </alternativeName>
</protein>
<feature type="chain" id="PRO_1000053939" description="Uridylate kinase">
    <location>
        <begin position="1"/>
        <end position="241"/>
    </location>
</feature>
<feature type="region of interest" description="Involved in allosteric activation by GTP" evidence="1">
    <location>
        <begin position="20"/>
        <end position="25"/>
    </location>
</feature>
<feature type="binding site" evidence="1">
    <location>
        <begin position="12"/>
        <end position="15"/>
    </location>
    <ligand>
        <name>ATP</name>
        <dbReference type="ChEBI" id="CHEBI:30616"/>
    </ligand>
</feature>
<feature type="binding site" evidence="1">
    <location>
        <position position="54"/>
    </location>
    <ligand>
        <name>UMP</name>
        <dbReference type="ChEBI" id="CHEBI:57865"/>
    </ligand>
</feature>
<feature type="binding site" evidence="1">
    <location>
        <position position="55"/>
    </location>
    <ligand>
        <name>ATP</name>
        <dbReference type="ChEBI" id="CHEBI:30616"/>
    </ligand>
</feature>
<feature type="binding site" evidence="1">
    <location>
        <position position="59"/>
    </location>
    <ligand>
        <name>ATP</name>
        <dbReference type="ChEBI" id="CHEBI:30616"/>
    </ligand>
</feature>
<feature type="binding site" evidence="1">
    <location>
        <position position="74"/>
    </location>
    <ligand>
        <name>UMP</name>
        <dbReference type="ChEBI" id="CHEBI:57865"/>
    </ligand>
</feature>
<feature type="binding site" evidence="1">
    <location>
        <begin position="135"/>
        <end position="142"/>
    </location>
    <ligand>
        <name>UMP</name>
        <dbReference type="ChEBI" id="CHEBI:57865"/>
    </ligand>
</feature>
<feature type="binding site" evidence="1">
    <location>
        <position position="163"/>
    </location>
    <ligand>
        <name>ATP</name>
        <dbReference type="ChEBI" id="CHEBI:30616"/>
    </ligand>
</feature>
<feature type="binding site" evidence="1">
    <location>
        <position position="169"/>
    </location>
    <ligand>
        <name>ATP</name>
        <dbReference type="ChEBI" id="CHEBI:30616"/>
    </ligand>
</feature>
<feature type="binding site" evidence="1">
    <location>
        <position position="172"/>
    </location>
    <ligand>
        <name>ATP</name>
        <dbReference type="ChEBI" id="CHEBI:30616"/>
    </ligand>
</feature>
<gene>
    <name evidence="1" type="primary">pyrH</name>
    <name type="ordered locus">Ldb1343</name>
</gene>
<name>PYRH_LACDA</name>
<sequence length="241" mass="25889">MSQVKYNRIILKISGEALAGEKGTGIDPTVIKKLAHEIKLVHDMGVQIGVVCGGGNMWRGETGAKLGMERAQADYMGMLATIMNGLALQDGLETAGVQTRLQTSISMRQVAEPYIRRVAISHMEKNRVVIFGGGTGNPYFSTDTTAALRAAEINADVILMAKNGVDGVYTADPNLDPSAKKFAELTQLDMISKGLQVMDRTASSLSMDTHIPLIVFNVNTPGNIKRVVEGENIGTIIRGDK</sequence>